<gene>
    <name evidence="1" type="primary">rdgC</name>
    <name type="ordered locus">EFER_2631</name>
</gene>
<accession>B7LMJ3</accession>
<protein>
    <recommendedName>
        <fullName evidence="1">Recombination-associated protein RdgC</fullName>
    </recommendedName>
</protein>
<organism>
    <name type="scientific">Escherichia fergusonii (strain ATCC 35469 / DSM 13698 / CCUG 18766 / IAM 14443 / JCM 21226 / LMG 7866 / NBRC 102419 / NCTC 12128 / CDC 0568-73)</name>
    <dbReference type="NCBI Taxonomy" id="585054"/>
    <lineage>
        <taxon>Bacteria</taxon>
        <taxon>Pseudomonadati</taxon>
        <taxon>Pseudomonadota</taxon>
        <taxon>Gammaproteobacteria</taxon>
        <taxon>Enterobacterales</taxon>
        <taxon>Enterobacteriaceae</taxon>
        <taxon>Escherichia</taxon>
    </lineage>
</organism>
<comment type="function">
    <text evidence="1">May be involved in recombination.</text>
</comment>
<comment type="subcellular location">
    <subcellularLocation>
        <location evidence="1">Cytoplasm</location>
        <location evidence="1">Nucleoid</location>
    </subcellularLocation>
</comment>
<comment type="similarity">
    <text evidence="1">Belongs to the RdgC family.</text>
</comment>
<proteinExistence type="inferred from homology"/>
<keyword id="KW-0963">Cytoplasm</keyword>
<keyword id="KW-0233">DNA recombination</keyword>
<name>RDGC_ESCF3</name>
<sequence>MLWFKNLMVYRLSRDVSLRAEEMEKQLASMAFTPCGSQDMAKMGWVAPMGSHSDALTHVANGQIVICARKEEKILPSPVIKQALEAKIAKLEAEQARKLKKTEKDSLKDEVLHSLLPRAFSRFSQTMMWIDTVNGLIMVDCASAKKAEDTLALLRKSLGSLPVVPLTLENPIELTLTEWVRSGSAAQGFQLLDEAELKSLLEDGGVIRAKKQDLTSEEITNHIEAGKVVTKLALDWQQRVQFVMCDDGSLKRLKFCDELRDQNEDIDREDFAQRFDADFILMTGELAALIQNLIEGLGGEAQR</sequence>
<reference key="1">
    <citation type="journal article" date="2009" name="PLoS Genet.">
        <title>Organised genome dynamics in the Escherichia coli species results in highly diverse adaptive paths.</title>
        <authorList>
            <person name="Touchon M."/>
            <person name="Hoede C."/>
            <person name="Tenaillon O."/>
            <person name="Barbe V."/>
            <person name="Baeriswyl S."/>
            <person name="Bidet P."/>
            <person name="Bingen E."/>
            <person name="Bonacorsi S."/>
            <person name="Bouchier C."/>
            <person name="Bouvet O."/>
            <person name="Calteau A."/>
            <person name="Chiapello H."/>
            <person name="Clermont O."/>
            <person name="Cruveiller S."/>
            <person name="Danchin A."/>
            <person name="Diard M."/>
            <person name="Dossat C."/>
            <person name="Karoui M.E."/>
            <person name="Frapy E."/>
            <person name="Garry L."/>
            <person name="Ghigo J.M."/>
            <person name="Gilles A.M."/>
            <person name="Johnson J."/>
            <person name="Le Bouguenec C."/>
            <person name="Lescat M."/>
            <person name="Mangenot S."/>
            <person name="Martinez-Jehanne V."/>
            <person name="Matic I."/>
            <person name="Nassif X."/>
            <person name="Oztas S."/>
            <person name="Petit M.A."/>
            <person name="Pichon C."/>
            <person name="Rouy Z."/>
            <person name="Ruf C.S."/>
            <person name="Schneider D."/>
            <person name="Tourret J."/>
            <person name="Vacherie B."/>
            <person name="Vallenet D."/>
            <person name="Medigue C."/>
            <person name="Rocha E.P.C."/>
            <person name="Denamur E."/>
        </authorList>
    </citation>
    <scope>NUCLEOTIDE SEQUENCE [LARGE SCALE GENOMIC DNA]</scope>
    <source>
        <strain>ATCC 35469 / DSM 13698 / BCRC 15582 / CCUG 18766 / IAM 14443 / JCM 21226 / LMG 7866 / NBRC 102419 / NCTC 12128 / CDC 0568-73</strain>
    </source>
</reference>
<evidence type="ECO:0000255" key="1">
    <source>
        <dbReference type="HAMAP-Rule" id="MF_00194"/>
    </source>
</evidence>
<feature type="chain" id="PRO_1000118631" description="Recombination-associated protein RdgC">
    <location>
        <begin position="1"/>
        <end position="303"/>
    </location>
</feature>
<dbReference type="EMBL" id="CU928158">
    <property type="protein sequence ID" value="CAQ90126.1"/>
    <property type="molecule type" value="Genomic_DNA"/>
</dbReference>
<dbReference type="RefSeq" id="WP_002431399.1">
    <property type="nucleotide sequence ID" value="NC_011740.1"/>
</dbReference>
<dbReference type="SMR" id="B7LMJ3"/>
<dbReference type="GeneID" id="75056339"/>
<dbReference type="KEGG" id="efe:EFER_2631"/>
<dbReference type="HOGENOM" id="CLU_052038_1_1_6"/>
<dbReference type="OrthoDB" id="5290530at2"/>
<dbReference type="Proteomes" id="UP000000745">
    <property type="component" value="Chromosome"/>
</dbReference>
<dbReference type="GO" id="GO:0043590">
    <property type="term" value="C:bacterial nucleoid"/>
    <property type="evidence" value="ECO:0007669"/>
    <property type="project" value="TreeGrafter"/>
</dbReference>
<dbReference type="GO" id="GO:0005737">
    <property type="term" value="C:cytoplasm"/>
    <property type="evidence" value="ECO:0007669"/>
    <property type="project" value="UniProtKB-UniRule"/>
</dbReference>
<dbReference type="GO" id="GO:0003690">
    <property type="term" value="F:double-stranded DNA binding"/>
    <property type="evidence" value="ECO:0007669"/>
    <property type="project" value="TreeGrafter"/>
</dbReference>
<dbReference type="GO" id="GO:0006310">
    <property type="term" value="P:DNA recombination"/>
    <property type="evidence" value="ECO:0007669"/>
    <property type="project" value="UniProtKB-UniRule"/>
</dbReference>
<dbReference type="GO" id="GO:0000018">
    <property type="term" value="P:regulation of DNA recombination"/>
    <property type="evidence" value="ECO:0007669"/>
    <property type="project" value="TreeGrafter"/>
</dbReference>
<dbReference type="HAMAP" id="MF_00194">
    <property type="entry name" value="RdgC"/>
    <property type="match status" value="1"/>
</dbReference>
<dbReference type="InterPro" id="IPR007476">
    <property type="entry name" value="RdgC"/>
</dbReference>
<dbReference type="NCBIfam" id="NF001460">
    <property type="entry name" value="PRK00321.1-1"/>
    <property type="match status" value="1"/>
</dbReference>
<dbReference type="NCBIfam" id="NF001462">
    <property type="entry name" value="PRK00321.1-3"/>
    <property type="match status" value="1"/>
</dbReference>
<dbReference type="NCBIfam" id="NF001464">
    <property type="entry name" value="PRK00321.1-5"/>
    <property type="match status" value="1"/>
</dbReference>
<dbReference type="PANTHER" id="PTHR38103">
    <property type="entry name" value="RECOMBINATION-ASSOCIATED PROTEIN RDGC"/>
    <property type="match status" value="1"/>
</dbReference>
<dbReference type="PANTHER" id="PTHR38103:SF1">
    <property type="entry name" value="RECOMBINATION-ASSOCIATED PROTEIN RDGC"/>
    <property type="match status" value="1"/>
</dbReference>
<dbReference type="Pfam" id="PF04381">
    <property type="entry name" value="RdgC"/>
    <property type="match status" value="1"/>
</dbReference>